<reference key="1">
    <citation type="journal article" date="2008" name="Genome Res.">
        <title>The genome of Pelotomaculum thermopropionicum reveals niche-associated evolution in anaerobic microbiota.</title>
        <authorList>
            <person name="Kosaka T."/>
            <person name="Kato S."/>
            <person name="Shimoyama T."/>
            <person name="Ishii S."/>
            <person name="Abe T."/>
            <person name="Watanabe K."/>
        </authorList>
    </citation>
    <scope>NUCLEOTIDE SEQUENCE [LARGE SCALE GENOMIC DNA]</scope>
    <source>
        <strain>DSM 13744 / JCM 10971 / SI</strain>
    </source>
</reference>
<organism>
    <name type="scientific">Pelotomaculum thermopropionicum (strain DSM 13744 / JCM 10971 / SI)</name>
    <dbReference type="NCBI Taxonomy" id="370438"/>
    <lineage>
        <taxon>Bacteria</taxon>
        <taxon>Bacillati</taxon>
        <taxon>Bacillota</taxon>
        <taxon>Clostridia</taxon>
        <taxon>Eubacteriales</taxon>
        <taxon>Desulfotomaculaceae</taxon>
        <taxon>Pelotomaculum</taxon>
    </lineage>
</organism>
<dbReference type="EMBL" id="AP009389">
    <property type="protein sequence ID" value="BAF58989.1"/>
    <property type="molecule type" value="Genomic_DNA"/>
</dbReference>
<dbReference type="SMR" id="A5D451"/>
<dbReference type="STRING" id="370438.PTH_0808"/>
<dbReference type="KEGG" id="pth:PTH_0808"/>
<dbReference type="eggNOG" id="COG0218">
    <property type="taxonomic scope" value="Bacteria"/>
</dbReference>
<dbReference type="HOGENOM" id="CLU_033732_3_0_9"/>
<dbReference type="Proteomes" id="UP000006556">
    <property type="component" value="Chromosome"/>
</dbReference>
<dbReference type="GO" id="GO:0005829">
    <property type="term" value="C:cytosol"/>
    <property type="evidence" value="ECO:0007669"/>
    <property type="project" value="TreeGrafter"/>
</dbReference>
<dbReference type="GO" id="GO:0005525">
    <property type="term" value="F:GTP binding"/>
    <property type="evidence" value="ECO:0007669"/>
    <property type="project" value="UniProtKB-UniRule"/>
</dbReference>
<dbReference type="GO" id="GO:0046872">
    <property type="term" value="F:metal ion binding"/>
    <property type="evidence" value="ECO:0007669"/>
    <property type="project" value="UniProtKB-KW"/>
</dbReference>
<dbReference type="GO" id="GO:0000917">
    <property type="term" value="P:division septum assembly"/>
    <property type="evidence" value="ECO:0007669"/>
    <property type="project" value="UniProtKB-KW"/>
</dbReference>
<dbReference type="CDD" id="cd01876">
    <property type="entry name" value="YihA_EngB"/>
    <property type="match status" value="1"/>
</dbReference>
<dbReference type="FunFam" id="3.40.50.300:FF:000098">
    <property type="entry name" value="Probable GTP-binding protein EngB"/>
    <property type="match status" value="1"/>
</dbReference>
<dbReference type="Gene3D" id="3.40.50.300">
    <property type="entry name" value="P-loop containing nucleotide triphosphate hydrolases"/>
    <property type="match status" value="1"/>
</dbReference>
<dbReference type="HAMAP" id="MF_00321">
    <property type="entry name" value="GTPase_EngB"/>
    <property type="match status" value="1"/>
</dbReference>
<dbReference type="InterPro" id="IPR030393">
    <property type="entry name" value="G_ENGB_dom"/>
</dbReference>
<dbReference type="InterPro" id="IPR006073">
    <property type="entry name" value="GTP-bd"/>
</dbReference>
<dbReference type="InterPro" id="IPR019987">
    <property type="entry name" value="GTP-bd_ribosome_bio_YsxC"/>
</dbReference>
<dbReference type="InterPro" id="IPR027417">
    <property type="entry name" value="P-loop_NTPase"/>
</dbReference>
<dbReference type="InterPro" id="IPR005225">
    <property type="entry name" value="Small_GTP-bd"/>
</dbReference>
<dbReference type="NCBIfam" id="TIGR03598">
    <property type="entry name" value="GTPase_YsxC"/>
    <property type="match status" value="1"/>
</dbReference>
<dbReference type="NCBIfam" id="TIGR00231">
    <property type="entry name" value="small_GTP"/>
    <property type="match status" value="1"/>
</dbReference>
<dbReference type="PANTHER" id="PTHR11649:SF13">
    <property type="entry name" value="ENGB-TYPE G DOMAIN-CONTAINING PROTEIN"/>
    <property type="match status" value="1"/>
</dbReference>
<dbReference type="PANTHER" id="PTHR11649">
    <property type="entry name" value="MSS1/TRME-RELATED GTP-BINDING PROTEIN"/>
    <property type="match status" value="1"/>
</dbReference>
<dbReference type="Pfam" id="PF01926">
    <property type="entry name" value="MMR_HSR1"/>
    <property type="match status" value="1"/>
</dbReference>
<dbReference type="SUPFAM" id="SSF52540">
    <property type="entry name" value="P-loop containing nucleoside triphosphate hydrolases"/>
    <property type="match status" value="1"/>
</dbReference>
<dbReference type="PROSITE" id="PS51706">
    <property type="entry name" value="G_ENGB"/>
    <property type="match status" value="1"/>
</dbReference>
<name>ENGB_PELTS</name>
<evidence type="ECO:0000255" key="1">
    <source>
        <dbReference type="HAMAP-Rule" id="MF_00321"/>
    </source>
</evidence>
<feature type="chain" id="PRO_1000079175" description="Probable GTP-binding protein EngB">
    <location>
        <begin position="1"/>
        <end position="198"/>
    </location>
</feature>
<feature type="domain" description="EngB-type G" evidence="1">
    <location>
        <begin position="22"/>
        <end position="195"/>
    </location>
</feature>
<feature type="binding site" evidence="1">
    <location>
        <begin position="30"/>
        <end position="37"/>
    </location>
    <ligand>
        <name>GTP</name>
        <dbReference type="ChEBI" id="CHEBI:37565"/>
    </ligand>
</feature>
<feature type="binding site" evidence="1">
    <location>
        <position position="37"/>
    </location>
    <ligand>
        <name>Mg(2+)</name>
        <dbReference type="ChEBI" id="CHEBI:18420"/>
    </ligand>
</feature>
<feature type="binding site" evidence="1">
    <location>
        <begin position="57"/>
        <end position="61"/>
    </location>
    <ligand>
        <name>GTP</name>
        <dbReference type="ChEBI" id="CHEBI:37565"/>
    </ligand>
</feature>
<feature type="binding site" evidence="1">
    <location>
        <position position="59"/>
    </location>
    <ligand>
        <name>Mg(2+)</name>
        <dbReference type="ChEBI" id="CHEBI:18420"/>
    </ligand>
</feature>
<feature type="binding site" evidence="1">
    <location>
        <begin position="75"/>
        <end position="78"/>
    </location>
    <ligand>
        <name>GTP</name>
        <dbReference type="ChEBI" id="CHEBI:37565"/>
    </ligand>
</feature>
<feature type="binding site" evidence="1">
    <location>
        <begin position="142"/>
        <end position="145"/>
    </location>
    <ligand>
        <name>GTP</name>
        <dbReference type="ChEBI" id="CHEBI:37565"/>
    </ligand>
</feature>
<feature type="binding site" evidence="1">
    <location>
        <begin position="174"/>
        <end position="176"/>
    </location>
    <ligand>
        <name>GTP</name>
        <dbReference type="ChEBI" id="CHEBI:37565"/>
    </ligand>
</feature>
<comment type="function">
    <text evidence="1">Necessary for normal cell division and for the maintenance of normal septation.</text>
</comment>
<comment type="cofactor">
    <cofactor evidence="1">
        <name>Mg(2+)</name>
        <dbReference type="ChEBI" id="CHEBI:18420"/>
    </cofactor>
</comment>
<comment type="similarity">
    <text evidence="1">Belongs to the TRAFAC class TrmE-Era-EngA-EngB-Septin-like GTPase superfamily. EngB GTPase family.</text>
</comment>
<proteinExistence type="inferred from homology"/>
<protein>
    <recommendedName>
        <fullName evidence="1">Probable GTP-binding protein EngB</fullName>
    </recommendedName>
</protein>
<sequence length="198" mass="22149">MKIKNAEFITSAAKTADYPAGNIPEVALAGRSNVGKSSLLNRLVNRKSLARISSTPGRTRLINFFLVNGLFRLVDLPGYGYAKVSARERQGWRRMVEEYLKTRENLKGVVLLVDSRHPPTVLDVQMYEWLKYQGIPAAVAATKADKISRSKRAQSLKVIREVLNLTAKEPLVFFSAETSEGREEMLEVIGRWVGLSGR</sequence>
<gene>
    <name evidence="1" type="primary">engB</name>
    <name type="ordered locus">PTH_0808</name>
</gene>
<accession>A5D451</accession>
<keyword id="KW-0131">Cell cycle</keyword>
<keyword id="KW-0132">Cell division</keyword>
<keyword id="KW-0342">GTP-binding</keyword>
<keyword id="KW-0460">Magnesium</keyword>
<keyword id="KW-0479">Metal-binding</keyword>
<keyword id="KW-0547">Nucleotide-binding</keyword>
<keyword id="KW-1185">Reference proteome</keyword>
<keyword id="KW-0717">Septation</keyword>